<organism>
    <name type="scientific">Acetoanaerobium sticklandii (strain ATCC 12662 / DSM 519 / JCM 1433 / CCUG 9281 / NCIMB 10654 / HF)</name>
    <name type="common">Clostridium sticklandii</name>
    <dbReference type="NCBI Taxonomy" id="499177"/>
    <lineage>
        <taxon>Bacteria</taxon>
        <taxon>Bacillati</taxon>
        <taxon>Bacillota</taxon>
        <taxon>Clostridia</taxon>
        <taxon>Peptostreptococcales</taxon>
        <taxon>Filifactoraceae</taxon>
        <taxon>Acetoanaerobium</taxon>
    </lineage>
</organism>
<comment type="function">
    <text evidence="1">Functions in trans to edit the amino acid moiety from incorrectly charged Ala-tRNA(Pro). Has weak activity on correctly charged tRNA(Ala), tRNA(Gly) as well as tRNA(Cys), tRNA(Met), tRNA(Pro), tRNA(Ser) and tRNA(Leu).</text>
</comment>
<comment type="subcellular location">
    <subcellularLocation>
        <location evidence="2">Cytoplasm</location>
    </subcellularLocation>
</comment>
<comment type="similarity">
    <text evidence="2">Belongs to the PRORSD1 family.</text>
</comment>
<comment type="sequence caution" evidence="2">
    <conflict type="erroneous initiation">
        <sequence resource="EMBL-CDS" id="CBH22356"/>
    </conflict>
    <text>Truncated N-terminus.</text>
</comment>
<feature type="chain" id="PRO_0000392535" description="Prolyl-tRNA editing protein ProX">
    <location>
        <begin position="1"/>
        <end position="164"/>
    </location>
</feature>
<reference key="1">
    <citation type="journal article" date="1999" name="J. Biol. Chem.">
        <title>Identification of D-proline reductase from Clostridium sticklandii as a selenoenzyme and indications for a catalytically active pyruvoyl group derived from a cysteine residue by cleavage of a proprotein.</title>
        <authorList>
            <person name="Kabisch U.C."/>
            <person name="Graentzdoerffer A."/>
            <person name="Schierhorn A."/>
            <person name="Ruecknagel K.P."/>
            <person name="Andreesen J.R."/>
            <person name="Pich A."/>
        </authorList>
    </citation>
    <scope>NUCLEOTIDE SEQUENCE [GENOMIC DNA]</scope>
    <source>
        <strain>ATCC 12662 / DSM 519 / JCM 1433 / CCUG 9281 / NCIMB 10654 / HF</strain>
    </source>
</reference>
<reference key="2">
    <citation type="journal article" date="2010" name="BMC Genomics">
        <title>Clostridium sticklandii, a specialist in amino acid degradation:revisiting its metabolism through its genome sequence.</title>
        <authorList>
            <person name="Fonknechten N."/>
            <person name="Chaussonnerie S."/>
            <person name="Tricot S."/>
            <person name="Lajus A."/>
            <person name="Andreesen J.R."/>
            <person name="Perchat N."/>
            <person name="Pelletier E."/>
            <person name="Gouyvenoux M."/>
            <person name="Barbe V."/>
            <person name="Salanoubat M."/>
            <person name="Le Paslier D."/>
            <person name="Weissenbach J."/>
            <person name="Cohen G.N."/>
            <person name="Kreimeyer A."/>
        </authorList>
    </citation>
    <scope>NUCLEOTIDE SEQUENCE [LARGE SCALE GENOMIC DNA]</scope>
    <source>
        <strain>ATCC 12662 / DSM 519 / JCM 1433 / CCUG 9281 / NCIMB 10654 / HF</strain>
    </source>
</reference>
<reference key="3">
    <citation type="journal article" date="2003" name="Proc. Natl. Acad. Sci. U.S.A.">
        <title>Trans-editing of mischarged tRNAs.</title>
        <authorList>
            <person name="Ahel I."/>
            <person name="Korencic D."/>
            <person name="Ibba M."/>
            <person name="Soll D."/>
        </authorList>
    </citation>
    <scope>FUNCTION AS TRNA(PRO) EDITING PROTEIN</scope>
    <source>
        <strain>ATCC 12662 / DSM 519 / JCM 1433 / CCUG 9281 / NCIMB 10654 / HF</strain>
    </source>
</reference>
<reference key="4">
    <citation type="journal article" date="2005" name="J. Biol. Chem.">
        <title>The bacterial YbaK protein is a Cys-tRNAPro and Cys-tRNA Cys deacylase.</title>
        <authorList>
            <person name="Ruan B."/>
            <person name="Soll D."/>
        </authorList>
    </citation>
    <scope>CHARACTERIZATION OF GENERAL DEACYLASE ACTIVITY</scope>
    <source>
        <strain>ATCC 12662 / DSM 519 / JCM 1433 / CCUG 9281 / NCIMB 10654 / HF</strain>
    </source>
</reference>
<protein>
    <recommendedName>
        <fullName>Prolyl-tRNA editing protein ProX</fullName>
    </recommendedName>
    <alternativeName>
        <fullName>Prolyl-tRNA deacylase ProX</fullName>
    </alternativeName>
</protein>
<accession>Q9L4Q7</accession>
<accession>E3PU02</accession>
<gene>
    <name type="primary">proX</name>
    <name type="synonym">prdX</name>
    <name type="ordered locus">CLOST_2238</name>
</gene>
<proteinExistence type="evidence at protein level"/>
<evidence type="ECO:0000269" key="1">
    <source>
    </source>
</evidence>
<evidence type="ECO:0000305" key="2"/>
<keyword id="KW-0963">Cytoplasm</keyword>
<keyword id="KW-1185">Reference proteome</keyword>
<name>PROX_ACESD</name>
<dbReference type="EMBL" id="AJ130879">
    <property type="protein sequence ID" value="CAB71308.1"/>
    <property type="molecule type" value="Genomic_DNA"/>
</dbReference>
<dbReference type="EMBL" id="FP565809">
    <property type="protein sequence ID" value="CBH22356.1"/>
    <property type="status" value="ALT_INIT"/>
    <property type="molecule type" value="Genomic_DNA"/>
</dbReference>
<dbReference type="SMR" id="Q9L4Q7"/>
<dbReference type="STRING" id="1511.CLOST_2238"/>
<dbReference type="KEGG" id="cst:CLOST_2238"/>
<dbReference type="eggNOG" id="COG3760">
    <property type="taxonomic scope" value="Bacteria"/>
</dbReference>
<dbReference type="HOGENOM" id="CLU_104635_0_0_9"/>
<dbReference type="Proteomes" id="UP000007041">
    <property type="component" value="Chromosome"/>
</dbReference>
<dbReference type="GO" id="GO:0005737">
    <property type="term" value="C:cytoplasm"/>
    <property type="evidence" value="ECO:0007669"/>
    <property type="project" value="UniProtKB-SubCell"/>
</dbReference>
<dbReference type="GO" id="GO:0043906">
    <property type="term" value="F:Ala-tRNA(Pro) deacylase activity"/>
    <property type="evidence" value="ECO:0000314"/>
    <property type="project" value="UniProtKB"/>
</dbReference>
<dbReference type="GO" id="GO:0002161">
    <property type="term" value="F:aminoacyl-tRNA deacylase activity"/>
    <property type="evidence" value="ECO:0000314"/>
    <property type="project" value="UniProtKB"/>
</dbReference>
<dbReference type="CDD" id="cd04335">
    <property type="entry name" value="PrdX_deacylase"/>
    <property type="match status" value="1"/>
</dbReference>
<dbReference type="FunFam" id="3.90.960.10:FF:000005">
    <property type="entry name" value="Putative prolyl-tRNA synthetase"/>
    <property type="match status" value="1"/>
</dbReference>
<dbReference type="Gene3D" id="3.90.960.10">
    <property type="entry name" value="YbaK/aminoacyl-tRNA synthetase-associated domain"/>
    <property type="match status" value="1"/>
</dbReference>
<dbReference type="InterPro" id="IPR040285">
    <property type="entry name" value="ProX/PRXD1"/>
</dbReference>
<dbReference type="InterPro" id="IPR036754">
    <property type="entry name" value="YbaK/aa-tRNA-synt-asso_dom_sf"/>
</dbReference>
<dbReference type="InterPro" id="IPR007214">
    <property type="entry name" value="YbaK/aa-tRNA-synth-assoc-dom"/>
</dbReference>
<dbReference type="PANTHER" id="PTHR31423:SF3">
    <property type="entry name" value="PROLYL-TRNA SYNTHETASE ASSOCIATED DOMAIN-CONTAINING PROTEIN 1-RELATED"/>
    <property type="match status" value="1"/>
</dbReference>
<dbReference type="PANTHER" id="PTHR31423">
    <property type="entry name" value="YBAK DOMAIN-CONTAINING PROTEIN"/>
    <property type="match status" value="1"/>
</dbReference>
<dbReference type="Pfam" id="PF04073">
    <property type="entry name" value="tRNA_edit"/>
    <property type="match status" value="1"/>
</dbReference>
<dbReference type="SUPFAM" id="SSF55826">
    <property type="entry name" value="YbaK/ProRS associated domain"/>
    <property type="match status" value="1"/>
</dbReference>
<sequence length="164" mass="18519">MDMDAKQAVIAKLDELKINYTLIEHDPVYTIEEMEKIDIENVDYIVKNLFLRDAKGRQHYLVVADKDQKIDLKTLQDKIGSTKLSFASEDRLQKYLKLTKGAVSPFGVLNDETAEVEVVFDKNLVGRSCVAVHPNDNSATVVLSYEDLEKIVKANGNTFKAIEL</sequence>